<gene>
    <name evidence="1" type="primary">mntP</name>
    <name type="ordered locus">RBAM_034100</name>
</gene>
<keyword id="KW-1003">Cell membrane</keyword>
<keyword id="KW-0406">Ion transport</keyword>
<keyword id="KW-0464">Manganese</keyword>
<keyword id="KW-0472">Membrane</keyword>
<keyword id="KW-0812">Transmembrane</keyword>
<keyword id="KW-1133">Transmembrane helix</keyword>
<keyword id="KW-0813">Transport</keyword>
<reference key="1">
    <citation type="journal article" date="2007" name="Nat. Biotechnol.">
        <title>Comparative analysis of the complete genome sequence of the plant growth-promoting bacterium Bacillus amyloliquefaciens FZB42.</title>
        <authorList>
            <person name="Chen X.H."/>
            <person name="Koumoutsi A."/>
            <person name="Scholz R."/>
            <person name="Eisenreich A."/>
            <person name="Schneider K."/>
            <person name="Heinemeyer I."/>
            <person name="Morgenstern B."/>
            <person name="Voss B."/>
            <person name="Hess W.R."/>
            <person name="Reva O."/>
            <person name="Junge H."/>
            <person name="Voigt B."/>
            <person name="Jungblut P.R."/>
            <person name="Vater J."/>
            <person name="Suessmuth R."/>
            <person name="Liesegang H."/>
            <person name="Strittmatter A."/>
            <person name="Gottschalk G."/>
            <person name="Borriss R."/>
        </authorList>
    </citation>
    <scope>NUCLEOTIDE SEQUENCE [LARGE SCALE GENOMIC DNA]</scope>
    <source>
        <strain>DSM 23117 / BGSC 10A6 / LMG 26770 / FZB42</strain>
    </source>
</reference>
<evidence type="ECO:0000255" key="1">
    <source>
        <dbReference type="HAMAP-Rule" id="MF_01521"/>
    </source>
</evidence>
<sequence length="185" mass="19081">MSNLFIGELVSLSIMAFALGTDAFSVGLGMGMIQLKKKQIFHIGVVIGLFHVMMPLAGMAAGHLLSGFLGMLAVYIGGSLLFILGVQMIIAAFKQSDGPLISPAGSGLLLFAIGVSLDSFSVGLSLGMNGSNPFLAVTLFGVFSTVLTWAGLLAGRKVQSWLGSYSEALGGAILIGFGLKLLLPV</sequence>
<comment type="function">
    <text evidence="1">Probably functions as a manganese efflux pump.</text>
</comment>
<comment type="subcellular location">
    <subcellularLocation>
        <location evidence="1">Cell membrane</location>
        <topology evidence="1">Multi-pass membrane protein</topology>
    </subcellularLocation>
</comment>
<comment type="similarity">
    <text evidence="1">Belongs to the MntP (TC 9.B.29) family.</text>
</comment>
<feature type="chain" id="PRO_0000315558" description="Putative manganese efflux pump MntP">
    <location>
        <begin position="1"/>
        <end position="185"/>
    </location>
</feature>
<feature type="transmembrane region" description="Helical" evidence="1">
    <location>
        <begin position="4"/>
        <end position="24"/>
    </location>
</feature>
<feature type="transmembrane region" description="Helical" evidence="1">
    <location>
        <begin position="40"/>
        <end position="60"/>
    </location>
</feature>
<feature type="transmembrane region" description="Helical" evidence="1">
    <location>
        <begin position="64"/>
        <end position="84"/>
    </location>
</feature>
<feature type="transmembrane region" description="Helical" evidence="1">
    <location>
        <begin position="108"/>
        <end position="128"/>
    </location>
</feature>
<feature type="transmembrane region" description="Helical" evidence="1">
    <location>
        <begin position="134"/>
        <end position="154"/>
    </location>
</feature>
<feature type="transmembrane region" description="Helical" evidence="1">
    <location>
        <begin position="165"/>
        <end position="185"/>
    </location>
</feature>
<dbReference type="EMBL" id="CP000560">
    <property type="protein sequence ID" value="ABS75739.1"/>
    <property type="molecule type" value="Genomic_DNA"/>
</dbReference>
<dbReference type="RefSeq" id="WP_012118661.1">
    <property type="nucleotide sequence ID" value="NC_009725.2"/>
</dbReference>
<dbReference type="GeneID" id="93082554"/>
<dbReference type="KEGG" id="bay:RBAM_034100"/>
<dbReference type="HOGENOM" id="CLU_096410_1_0_9"/>
<dbReference type="Proteomes" id="UP000001120">
    <property type="component" value="Chromosome"/>
</dbReference>
<dbReference type="GO" id="GO:0005886">
    <property type="term" value="C:plasma membrane"/>
    <property type="evidence" value="ECO:0007669"/>
    <property type="project" value="UniProtKB-SubCell"/>
</dbReference>
<dbReference type="GO" id="GO:0005384">
    <property type="term" value="F:manganese ion transmembrane transporter activity"/>
    <property type="evidence" value="ECO:0007669"/>
    <property type="project" value="UniProtKB-UniRule"/>
</dbReference>
<dbReference type="HAMAP" id="MF_01521">
    <property type="entry name" value="MntP_pump"/>
    <property type="match status" value="1"/>
</dbReference>
<dbReference type="InterPro" id="IPR003810">
    <property type="entry name" value="Mntp/YtaF"/>
</dbReference>
<dbReference type="InterPro" id="IPR022929">
    <property type="entry name" value="Put_MntP"/>
</dbReference>
<dbReference type="PANTHER" id="PTHR35529">
    <property type="entry name" value="MANGANESE EFFLUX PUMP MNTP-RELATED"/>
    <property type="match status" value="1"/>
</dbReference>
<dbReference type="PANTHER" id="PTHR35529:SF1">
    <property type="entry name" value="MANGANESE EFFLUX PUMP MNTP-RELATED"/>
    <property type="match status" value="1"/>
</dbReference>
<dbReference type="Pfam" id="PF02659">
    <property type="entry name" value="Mntp"/>
    <property type="match status" value="1"/>
</dbReference>
<protein>
    <recommendedName>
        <fullName evidence="1">Putative manganese efflux pump MntP</fullName>
    </recommendedName>
</protein>
<proteinExistence type="inferred from homology"/>
<name>MNTP_BACVZ</name>
<accession>A7Z9R3</accession>
<organism>
    <name type="scientific">Bacillus velezensis (strain DSM 23117 / BGSC 10A6 / LMG 26770 / FZB42)</name>
    <name type="common">Bacillus amyloliquefaciens subsp. plantarum</name>
    <dbReference type="NCBI Taxonomy" id="326423"/>
    <lineage>
        <taxon>Bacteria</taxon>
        <taxon>Bacillati</taxon>
        <taxon>Bacillota</taxon>
        <taxon>Bacilli</taxon>
        <taxon>Bacillales</taxon>
        <taxon>Bacillaceae</taxon>
        <taxon>Bacillus</taxon>
        <taxon>Bacillus amyloliquefaciens group</taxon>
    </lineage>
</organism>